<gene>
    <name evidence="1" type="primary">leuA</name>
    <name type="ordered locus">XC_0837</name>
</gene>
<feature type="chain" id="PRO_1000149333" description="2-isopropylmalate synthase">
    <location>
        <begin position="1"/>
        <end position="520"/>
    </location>
</feature>
<feature type="domain" description="Pyruvate carboxyltransferase" evidence="1">
    <location>
        <begin position="12"/>
        <end position="274"/>
    </location>
</feature>
<feature type="region of interest" description="Regulatory domain" evidence="1">
    <location>
        <begin position="396"/>
        <end position="520"/>
    </location>
</feature>
<feature type="binding site" evidence="1">
    <location>
        <position position="21"/>
    </location>
    <ligand>
        <name>Mn(2+)</name>
        <dbReference type="ChEBI" id="CHEBI:29035"/>
    </ligand>
</feature>
<feature type="binding site" evidence="1">
    <location>
        <position position="209"/>
    </location>
    <ligand>
        <name>Mn(2+)</name>
        <dbReference type="ChEBI" id="CHEBI:29035"/>
    </ligand>
</feature>
<feature type="binding site" evidence="1">
    <location>
        <position position="211"/>
    </location>
    <ligand>
        <name>Mn(2+)</name>
        <dbReference type="ChEBI" id="CHEBI:29035"/>
    </ligand>
</feature>
<feature type="binding site" evidence="1">
    <location>
        <position position="245"/>
    </location>
    <ligand>
        <name>Mn(2+)</name>
        <dbReference type="ChEBI" id="CHEBI:29035"/>
    </ligand>
</feature>
<reference key="1">
    <citation type="journal article" date="2005" name="Genome Res.">
        <title>Comparative and functional genomic analyses of the pathogenicity of phytopathogen Xanthomonas campestris pv. campestris.</title>
        <authorList>
            <person name="Qian W."/>
            <person name="Jia Y."/>
            <person name="Ren S.-X."/>
            <person name="He Y.-Q."/>
            <person name="Feng J.-X."/>
            <person name="Lu L.-F."/>
            <person name="Sun Q."/>
            <person name="Ying G."/>
            <person name="Tang D.-J."/>
            <person name="Tang H."/>
            <person name="Wu W."/>
            <person name="Hao P."/>
            <person name="Wang L."/>
            <person name="Jiang B.-L."/>
            <person name="Zeng S."/>
            <person name="Gu W.-Y."/>
            <person name="Lu G."/>
            <person name="Rong L."/>
            <person name="Tian Y."/>
            <person name="Yao Z."/>
            <person name="Fu G."/>
            <person name="Chen B."/>
            <person name="Fang R."/>
            <person name="Qiang B."/>
            <person name="Chen Z."/>
            <person name="Zhao G.-P."/>
            <person name="Tang J.-L."/>
            <person name="He C."/>
        </authorList>
    </citation>
    <scope>NUCLEOTIDE SEQUENCE [LARGE SCALE GENOMIC DNA]</scope>
    <source>
        <strain>8004</strain>
    </source>
</reference>
<sequence>MNTTVSNQTPHIRIFDTTLRDGEQSPGCSMTPQQKLVMARALDALGVDIIETGFPASSYSDREAVAMMGRELRRPTLAVLSRCLQADIEISARALEAAANPRLHVFLSTSPLHREHKLRMSREQVLESVHKHVTLARGYIDDIEFSAEDATRTEEDFLAEVTRVAIAAGATTINLPDTVGFTTPEEIRGMFSRLIASVEGAEKVIFSTHCHNDLGLAAANSLAAIEGGARQVECTINGIGERAGNCALEEITMALKVRGAFYNLDTAINTPRIVSTSQLLQRLVGMPVQRNKAVVGGNAFAHESGIHQHGMLRHRGTYEIMRPEDVGWESSQMVLGRHSGRAAVEQRLRALGYLLEEDEAKLVFEQFKALCEKQRVVTDADLQALMQDATVQEGYRLASMTISDVGSRANALVELSDPDGNRVAETAQGNGPVDALFGALASATGVKLELDSYQVHSVGIGADARGEASLSVRHDGVEYEGTGTSKDIIEASALAWLDVANRLLRQRERGVVAGKTAAVA</sequence>
<comment type="function">
    <text evidence="1">Catalyzes the condensation of the acetyl group of acetyl-CoA with 3-methyl-2-oxobutanoate (2-ketoisovalerate) to form 3-carboxy-3-hydroxy-4-methylpentanoate (2-isopropylmalate).</text>
</comment>
<comment type="catalytic activity">
    <reaction evidence="1">
        <text>3-methyl-2-oxobutanoate + acetyl-CoA + H2O = (2S)-2-isopropylmalate + CoA + H(+)</text>
        <dbReference type="Rhea" id="RHEA:21524"/>
        <dbReference type="ChEBI" id="CHEBI:1178"/>
        <dbReference type="ChEBI" id="CHEBI:11851"/>
        <dbReference type="ChEBI" id="CHEBI:15377"/>
        <dbReference type="ChEBI" id="CHEBI:15378"/>
        <dbReference type="ChEBI" id="CHEBI:57287"/>
        <dbReference type="ChEBI" id="CHEBI:57288"/>
        <dbReference type="EC" id="2.3.3.13"/>
    </reaction>
</comment>
<comment type="cofactor">
    <cofactor evidence="1">
        <name>Mn(2+)</name>
        <dbReference type="ChEBI" id="CHEBI:29035"/>
    </cofactor>
</comment>
<comment type="pathway">
    <text evidence="1">Amino-acid biosynthesis; L-leucine biosynthesis; L-leucine from 3-methyl-2-oxobutanoate: step 1/4.</text>
</comment>
<comment type="subunit">
    <text evidence="1">Homodimer.</text>
</comment>
<comment type="subcellular location">
    <subcellularLocation>
        <location evidence="1">Cytoplasm</location>
    </subcellularLocation>
</comment>
<comment type="similarity">
    <text evidence="1">Belongs to the alpha-IPM synthase/homocitrate synthase family. LeuA type 1 subfamily.</text>
</comment>
<keyword id="KW-0028">Amino-acid biosynthesis</keyword>
<keyword id="KW-0100">Branched-chain amino acid biosynthesis</keyword>
<keyword id="KW-0963">Cytoplasm</keyword>
<keyword id="KW-0432">Leucine biosynthesis</keyword>
<keyword id="KW-0464">Manganese</keyword>
<keyword id="KW-0479">Metal-binding</keyword>
<keyword id="KW-0808">Transferase</keyword>
<protein>
    <recommendedName>
        <fullName evidence="1">2-isopropylmalate synthase</fullName>
        <ecNumber evidence="1">2.3.3.13</ecNumber>
    </recommendedName>
    <alternativeName>
        <fullName evidence="1">Alpha-IPM synthase</fullName>
    </alternativeName>
    <alternativeName>
        <fullName evidence="1">Alpha-isopropylmalate synthase</fullName>
    </alternativeName>
</protein>
<name>LEU1_XANC8</name>
<accession>Q4UYG1</accession>
<evidence type="ECO:0000255" key="1">
    <source>
        <dbReference type="HAMAP-Rule" id="MF_01025"/>
    </source>
</evidence>
<proteinExistence type="inferred from homology"/>
<organism>
    <name type="scientific">Xanthomonas campestris pv. campestris (strain 8004)</name>
    <dbReference type="NCBI Taxonomy" id="314565"/>
    <lineage>
        <taxon>Bacteria</taxon>
        <taxon>Pseudomonadati</taxon>
        <taxon>Pseudomonadota</taxon>
        <taxon>Gammaproteobacteria</taxon>
        <taxon>Lysobacterales</taxon>
        <taxon>Lysobacteraceae</taxon>
        <taxon>Xanthomonas</taxon>
    </lineage>
</organism>
<dbReference type="EC" id="2.3.3.13" evidence="1"/>
<dbReference type="EMBL" id="CP000050">
    <property type="protein sequence ID" value="AAY47912.1"/>
    <property type="molecule type" value="Genomic_DNA"/>
</dbReference>
<dbReference type="RefSeq" id="WP_011038426.1">
    <property type="nucleotide sequence ID" value="NZ_CP155948.1"/>
</dbReference>
<dbReference type="SMR" id="Q4UYG1"/>
<dbReference type="KEGG" id="xcb:XC_0837"/>
<dbReference type="HOGENOM" id="CLU_022158_0_1_6"/>
<dbReference type="UniPathway" id="UPA00048">
    <property type="reaction ID" value="UER00070"/>
</dbReference>
<dbReference type="Proteomes" id="UP000000420">
    <property type="component" value="Chromosome"/>
</dbReference>
<dbReference type="GO" id="GO:0005829">
    <property type="term" value="C:cytosol"/>
    <property type="evidence" value="ECO:0007669"/>
    <property type="project" value="TreeGrafter"/>
</dbReference>
<dbReference type="GO" id="GO:0003852">
    <property type="term" value="F:2-isopropylmalate synthase activity"/>
    <property type="evidence" value="ECO:0007669"/>
    <property type="project" value="UniProtKB-UniRule"/>
</dbReference>
<dbReference type="GO" id="GO:0003985">
    <property type="term" value="F:acetyl-CoA C-acetyltransferase activity"/>
    <property type="evidence" value="ECO:0007669"/>
    <property type="project" value="UniProtKB-UniRule"/>
</dbReference>
<dbReference type="GO" id="GO:0030145">
    <property type="term" value="F:manganese ion binding"/>
    <property type="evidence" value="ECO:0007669"/>
    <property type="project" value="UniProtKB-UniRule"/>
</dbReference>
<dbReference type="GO" id="GO:0009098">
    <property type="term" value="P:L-leucine biosynthetic process"/>
    <property type="evidence" value="ECO:0007669"/>
    <property type="project" value="UniProtKB-UniRule"/>
</dbReference>
<dbReference type="CDD" id="cd07940">
    <property type="entry name" value="DRE_TIM_IPMS"/>
    <property type="match status" value="1"/>
</dbReference>
<dbReference type="FunFam" id="1.10.238.260:FF:000001">
    <property type="entry name" value="2-isopropylmalate synthase"/>
    <property type="match status" value="1"/>
</dbReference>
<dbReference type="FunFam" id="3.20.20.70:FF:000010">
    <property type="entry name" value="2-isopropylmalate synthase"/>
    <property type="match status" value="1"/>
</dbReference>
<dbReference type="FunFam" id="3.30.160.270:FF:000003">
    <property type="entry name" value="2-isopropylmalate synthase"/>
    <property type="match status" value="1"/>
</dbReference>
<dbReference type="Gene3D" id="1.10.238.260">
    <property type="match status" value="1"/>
</dbReference>
<dbReference type="Gene3D" id="3.30.160.270">
    <property type="match status" value="1"/>
</dbReference>
<dbReference type="Gene3D" id="3.20.20.70">
    <property type="entry name" value="Aldolase class I"/>
    <property type="match status" value="1"/>
</dbReference>
<dbReference type="HAMAP" id="MF_01025">
    <property type="entry name" value="LeuA_type1"/>
    <property type="match status" value="1"/>
</dbReference>
<dbReference type="InterPro" id="IPR050073">
    <property type="entry name" value="2-IPM_HCS-like"/>
</dbReference>
<dbReference type="InterPro" id="IPR013709">
    <property type="entry name" value="2-isopropylmalate_synth_dimer"/>
</dbReference>
<dbReference type="InterPro" id="IPR002034">
    <property type="entry name" value="AIPM/Hcit_synth_CS"/>
</dbReference>
<dbReference type="InterPro" id="IPR013785">
    <property type="entry name" value="Aldolase_TIM"/>
</dbReference>
<dbReference type="InterPro" id="IPR054691">
    <property type="entry name" value="LeuA/HCS_post-cat"/>
</dbReference>
<dbReference type="InterPro" id="IPR036230">
    <property type="entry name" value="LeuA_allosteric_dom_sf"/>
</dbReference>
<dbReference type="InterPro" id="IPR005671">
    <property type="entry name" value="LeuA_bact_synth"/>
</dbReference>
<dbReference type="InterPro" id="IPR000891">
    <property type="entry name" value="PYR_CT"/>
</dbReference>
<dbReference type="NCBIfam" id="TIGR00973">
    <property type="entry name" value="leuA_bact"/>
    <property type="match status" value="1"/>
</dbReference>
<dbReference type="NCBIfam" id="NF002086">
    <property type="entry name" value="PRK00915.1-3"/>
    <property type="match status" value="1"/>
</dbReference>
<dbReference type="PANTHER" id="PTHR10277:SF9">
    <property type="entry name" value="2-ISOPROPYLMALATE SYNTHASE 1, CHLOROPLASTIC-RELATED"/>
    <property type="match status" value="1"/>
</dbReference>
<dbReference type="PANTHER" id="PTHR10277">
    <property type="entry name" value="HOMOCITRATE SYNTHASE-RELATED"/>
    <property type="match status" value="1"/>
</dbReference>
<dbReference type="Pfam" id="PF22617">
    <property type="entry name" value="HCS_D2"/>
    <property type="match status" value="1"/>
</dbReference>
<dbReference type="Pfam" id="PF00682">
    <property type="entry name" value="HMGL-like"/>
    <property type="match status" value="1"/>
</dbReference>
<dbReference type="Pfam" id="PF08502">
    <property type="entry name" value="LeuA_dimer"/>
    <property type="match status" value="1"/>
</dbReference>
<dbReference type="SMART" id="SM00917">
    <property type="entry name" value="LeuA_dimer"/>
    <property type="match status" value="1"/>
</dbReference>
<dbReference type="SUPFAM" id="SSF110921">
    <property type="entry name" value="2-isopropylmalate synthase LeuA, allosteric (dimerisation) domain"/>
    <property type="match status" value="1"/>
</dbReference>
<dbReference type="SUPFAM" id="SSF51569">
    <property type="entry name" value="Aldolase"/>
    <property type="match status" value="1"/>
</dbReference>
<dbReference type="PROSITE" id="PS00815">
    <property type="entry name" value="AIPM_HOMOCIT_SYNTH_1"/>
    <property type="match status" value="1"/>
</dbReference>
<dbReference type="PROSITE" id="PS00816">
    <property type="entry name" value="AIPM_HOMOCIT_SYNTH_2"/>
    <property type="match status" value="1"/>
</dbReference>
<dbReference type="PROSITE" id="PS50991">
    <property type="entry name" value="PYR_CT"/>
    <property type="match status" value="1"/>
</dbReference>